<comment type="function">
    <text evidence="2">General transcription factor that plays a role in transcription initiation by RNA polymerase II (Pol II). Involved in the pre-initiation complex (PIC) formation and Pol II recruitment at promoter DNA. Together with the TATA box-bound TBP forms the core initiation complex and provides a bridge between TBP and the Pol II-TFIIF complex. Released from the PIC early following the onset of transcription during the initiation and elongation transition and reassociates with TBP during the next transcription cycle. Associates with chromatin to core promoter-specific regions. Binds to two distinct DNA core promoter consensus sequence elements in a TBP-independent manner; these IIB-recognition elements (BREs) are localized immediately upstream (BREu), 5'-[GC][GC][GA]CGCC-3', and downstream (BREd), 5'-[GA]T[TGA][TG][GT][TG][TG]-3', of the TATA box element. Modulates transcription start site selection. Also exhibits autoacetyltransferase activity that contributes to the activated transcription.</text>
</comment>
<comment type="catalytic activity">
    <reaction evidence="2">
        <text>L-lysyl-[protein] + acetyl-CoA = N(6)-acetyl-L-lysyl-[protein] + CoA + H(+)</text>
        <dbReference type="Rhea" id="RHEA:45948"/>
        <dbReference type="Rhea" id="RHEA-COMP:9752"/>
        <dbReference type="Rhea" id="RHEA-COMP:10731"/>
        <dbReference type="ChEBI" id="CHEBI:15378"/>
        <dbReference type="ChEBI" id="CHEBI:29969"/>
        <dbReference type="ChEBI" id="CHEBI:57287"/>
        <dbReference type="ChEBI" id="CHEBI:57288"/>
        <dbReference type="ChEBI" id="CHEBI:61930"/>
        <dbReference type="EC" id="2.3.1.48"/>
    </reaction>
</comment>
<comment type="subunit">
    <text evidence="1 2">Found in a ternary complex with TATA box-bound TBP. Part of a TFIID-containing RNA polymerase II pre-initiation complex (PIC) that is composed of TBP and at least GTF2A1, GTF2A2, GTF2E1, GTF2E2, GTF2F1, GTF2H2, GTF2H3, GTF2H4, GTF2H5, GTF2B, TCEA1, ERCC2, ERCC3, TAF1, TAF2, TAF3, TAF4, TAF5, TAF6, TAF7, TAF8, TAF9, TAF10, TAF11, TAF12 and TAF13. Associates with TFIID-TFIIA (DA complex) to form TFIID-TFIIA-TFIIB (DAB complex), which is then recognized by RNA polymerase II (Pol II). Found in a RNA polymerase II initiation complex. Interacts (via C-terminus) with TBP; this interaction with TATA box-bound TBP guides Pol II into the PIC. Interacts (via N-terminus) with Pol II. Interacts (via C-terminus) with SSU72; this interaction is inhibited by SYMPK. Interacts with NR2F1; this interaction is direct. Interacts with PGR. Interacts with ESR1. Interacts with GTF2F1 (via C-terminus and preferentially via acetylated form); this interaction prevents binding of GTF2B to GTF2F2. Interacts with GTF2F2 (via N-terminus); this interaction is inhibited in presence of GTF2F1. Interacts with the transcription elongation factor TCEA2. Interacts with HSF1 (via transactivation domain) (By similarity). Interacts with GPBP1 (By similarity).</text>
</comment>
<comment type="subcellular location">
    <subcellularLocation>
        <location evidence="2">Nucleus</location>
    </subcellularLocation>
    <subcellularLocation>
        <location evidence="2">Chromosome</location>
    </subcellularLocation>
    <text evidence="2">Non-acetylated form colocalizes with DNA in the G0/1, S and G2 phases of the cell cycle, but not during mitosis. Acetylated form colocalizes at transcriptionally silent mitotic chromatids during mitosis at metaphase, anaphase, and telophase phases of the cell cycle.</text>
</comment>
<comment type="domain">
    <text evidence="2">The TFIIB-type zinc-binding domain is necessary for the interaction and recruitment of RNA polymerase II to the core promoter, the formation of a fully competent pre-initiation complex (PIC) assembly and basal transcription initiation. The C-terminus is necessary and sufficient for interaction with the TATA box-bound TBP complex and for the formation of PIC.</text>
</comment>
<comment type="PTM">
    <text evidence="2">Acetylated. Autoacetylated; autoacetylation at Lys-238 stimulates transcription activation.</text>
</comment>
<comment type="similarity">
    <text evidence="4">Belongs to the TFIIB family.</text>
</comment>
<accession>P62916</accession>
<accession>P29053</accession>
<gene>
    <name evidence="5" type="primary">Gtf2b</name>
</gene>
<proteinExistence type="evidence at transcript level"/>
<dbReference type="EC" id="2.3.1.48" evidence="2"/>
<dbReference type="EMBL" id="X65948">
    <property type="protein sequence ID" value="CAA46766.1"/>
    <property type="molecule type" value="mRNA"/>
</dbReference>
<dbReference type="EMBL" id="BC085345">
    <property type="protein sequence ID" value="AAH85345.1"/>
    <property type="molecule type" value="mRNA"/>
</dbReference>
<dbReference type="PIR" id="S26299">
    <property type="entry name" value="S26299"/>
</dbReference>
<dbReference type="RefSeq" id="NP_112303.1">
    <property type="nucleotide sequence ID" value="NM_031041.2"/>
</dbReference>
<dbReference type="SMR" id="P62916"/>
<dbReference type="BioGRID" id="249570">
    <property type="interactions" value="3"/>
</dbReference>
<dbReference type="FunCoup" id="P62916">
    <property type="interactions" value="2647"/>
</dbReference>
<dbReference type="IntAct" id="P62916">
    <property type="interactions" value="2"/>
</dbReference>
<dbReference type="STRING" id="10116.ENSRNOP00000070077"/>
<dbReference type="PhosphoSitePlus" id="P62916"/>
<dbReference type="jPOST" id="P62916"/>
<dbReference type="PaxDb" id="10116-ENSRNOP00000015033"/>
<dbReference type="GeneID" id="81673"/>
<dbReference type="KEGG" id="rno:81673"/>
<dbReference type="AGR" id="RGD:619735"/>
<dbReference type="CTD" id="2959"/>
<dbReference type="RGD" id="619735">
    <property type="gene designation" value="Gtf2b"/>
</dbReference>
<dbReference type="eggNOG" id="KOG1597">
    <property type="taxonomic scope" value="Eukaryota"/>
</dbReference>
<dbReference type="InParanoid" id="P62916"/>
<dbReference type="OrthoDB" id="25501at9989"/>
<dbReference type="PhylomeDB" id="P62916"/>
<dbReference type="TreeFam" id="TF105953"/>
<dbReference type="Reactome" id="R-RNO-674695">
    <property type="pathway name" value="RNA Polymerase II Pre-transcription Events"/>
</dbReference>
<dbReference type="Reactome" id="R-RNO-6807505">
    <property type="pathway name" value="RNA polymerase II transcribes snRNA genes"/>
</dbReference>
<dbReference type="Reactome" id="R-RNO-73776">
    <property type="pathway name" value="RNA Polymerase II Promoter Escape"/>
</dbReference>
<dbReference type="Reactome" id="R-RNO-73779">
    <property type="pathway name" value="RNA Polymerase II Transcription Pre-Initiation And Promoter Opening"/>
</dbReference>
<dbReference type="Reactome" id="R-RNO-75953">
    <property type="pathway name" value="RNA Polymerase II Transcription Initiation"/>
</dbReference>
<dbReference type="Reactome" id="R-RNO-76042">
    <property type="pathway name" value="RNA Polymerase II Transcription Initiation And Promoter Clearance"/>
</dbReference>
<dbReference type="PRO" id="PR:P62916"/>
<dbReference type="Proteomes" id="UP000002494">
    <property type="component" value="Unplaced"/>
</dbReference>
<dbReference type="GO" id="GO:0032153">
    <property type="term" value="C:cell division site"/>
    <property type="evidence" value="ECO:0000266"/>
    <property type="project" value="RGD"/>
</dbReference>
<dbReference type="GO" id="GO:0005694">
    <property type="term" value="C:chromosome"/>
    <property type="evidence" value="ECO:0000250"/>
    <property type="project" value="UniProtKB"/>
</dbReference>
<dbReference type="GO" id="GO:0000793">
    <property type="term" value="C:condensed chromosome"/>
    <property type="evidence" value="ECO:0000266"/>
    <property type="project" value="RGD"/>
</dbReference>
<dbReference type="GO" id="GO:0042585">
    <property type="term" value="C:germinal vesicle"/>
    <property type="evidence" value="ECO:0000266"/>
    <property type="project" value="RGD"/>
</dbReference>
<dbReference type="GO" id="GO:0000776">
    <property type="term" value="C:kinetochore"/>
    <property type="evidence" value="ECO:0000266"/>
    <property type="project" value="RGD"/>
</dbReference>
<dbReference type="GO" id="GO:0016604">
    <property type="term" value="C:nuclear body"/>
    <property type="evidence" value="ECO:0007669"/>
    <property type="project" value="Ensembl"/>
</dbReference>
<dbReference type="GO" id="GO:0005634">
    <property type="term" value="C:nucleus"/>
    <property type="evidence" value="ECO:0000250"/>
    <property type="project" value="UniProtKB"/>
</dbReference>
<dbReference type="GO" id="GO:0032993">
    <property type="term" value="C:protein-DNA complex"/>
    <property type="evidence" value="ECO:0000250"/>
    <property type="project" value="UniProtKB"/>
</dbReference>
<dbReference type="GO" id="GO:0090575">
    <property type="term" value="C:RNA polymerase II transcription regulator complex"/>
    <property type="evidence" value="ECO:0000266"/>
    <property type="project" value="RGD"/>
</dbReference>
<dbReference type="GO" id="GO:0005669">
    <property type="term" value="C:transcription factor TFIID complex"/>
    <property type="evidence" value="ECO:0000266"/>
    <property type="project" value="RGD"/>
</dbReference>
<dbReference type="GO" id="GO:0097550">
    <property type="term" value="C:transcription preinitiation complex"/>
    <property type="evidence" value="ECO:0000318"/>
    <property type="project" value="GO_Central"/>
</dbReference>
<dbReference type="GO" id="GO:0016407">
    <property type="term" value="F:acetyltransferase activity"/>
    <property type="evidence" value="ECO:0000250"/>
    <property type="project" value="UniProtKB"/>
</dbReference>
<dbReference type="GO" id="GO:0003677">
    <property type="term" value="F:DNA binding"/>
    <property type="evidence" value="ECO:0000266"/>
    <property type="project" value="RGD"/>
</dbReference>
<dbReference type="GO" id="GO:0140297">
    <property type="term" value="F:DNA-binding transcription factor binding"/>
    <property type="evidence" value="ECO:0000266"/>
    <property type="project" value="RGD"/>
</dbReference>
<dbReference type="GO" id="GO:0004402">
    <property type="term" value="F:histone acetyltransferase activity"/>
    <property type="evidence" value="ECO:0007669"/>
    <property type="project" value="UniProtKB-EC"/>
</dbReference>
<dbReference type="GO" id="GO:0046966">
    <property type="term" value="F:nuclear thyroid hormone receptor binding"/>
    <property type="evidence" value="ECO:0000266"/>
    <property type="project" value="RGD"/>
</dbReference>
<dbReference type="GO" id="GO:1990841">
    <property type="term" value="F:promoter-specific chromatin binding"/>
    <property type="evidence" value="ECO:0000250"/>
    <property type="project" value="UniProtKB"/>
</dbReference>
<dbReference type="GO" id="GO:0000993">
    <property type="term" value="F:RNA polymerase II complex binding"/>
    <property type="evidence" value="ECO:0000250"/>
    <property type="project" value="UniProtKB"/>
</dbReference>
<dbReference type="GO" id="GO:0000979">
    <property type="term" value="F:RNA polymerase II core promoter sequence-specific DNA binding"/>
    <property type="evidence" value="ECO:0000250"/>
    <property type="project" value="UniProtKB"/>
</dbReference>
<dbReference type="GO" id="GO:0016251">
    <property type="term" value="F:RNA polymerase II general transcription initiation factor activity"/>
    <property type="evidence" value="ECO:0000266"/>
    <property type="project" value="RGD"/>
</dbReference>
<dbReference type="GO" id="GO:0017025">
    <property type="term" value="F:TBP-class protein binding"/>
    <property type="evidence" value="ECO:0000266"/>
    <property type="project" value="RGD"/>
</dbReference>
<dbReference type="GO" id="GO:0008270">
    <property type="term" value="F:zinc ion binding"/>
    <property type="evidence" value="ECO:0000250"/>
    <property type="project" value="UniProtKB"/>
</dbReference>
<dbReference type="GO" id="GO:0051276">
    <property type="term" value="P:chromosome organization"/>
    <property type="evidence" value="ECO:0000266"/>
    <property type="project" value="RGD"/>
</dbReference>
<dbReference type="GO" id="GO:0006352">
    <property type="term" value="P:DNA-templated transcription initiation"/>
    <property type="evidence" value="ECO:0000318"/>
    <property type="project" value="GO_Central"/>
</dbReference>
<dbReference type="GO" id="GO:0010467">
    <property type="term" value="P:gene expression"/>
    <property type="evidence" value="ECO:0000266"/>
    <property type="project" value="RGD"/>
</dbReference>
<dbReference type="GO" id="GO:0051177">
    <property type="term" value="P:meiotic sister chromatid cohesion"/>
    <property type="evidence" value="ECO:0000266"/>
    <property type="project" value="RGD"/>
</dbReference>
<dbReference type="GO" id="GO:0006473">
    <property type="term" value="P:protein acetylation"/>
    <property type="evidence" value="ECO:0000250"/>
    <property type="project" value="UniProtKB"/>
</dbReference>
<dbReference type="GO" id="GO:1990114">
    <property type="term" value="P:RNA polymerase II core complex assembly"/>
    <property type="evidence" value="ECO:0000250"/>
    <property type="project" value="UniProtKB"/>
</dbReference>
<dbReference type="GO" id="GO:0051123">
    <property type="term" value="P:RNA polymerase II preinitiation complex assembly"/>
    <property type="evidence" value="ECO:0000250"/>
    <property type="project" value="UniProtKB"/>
</dbReference>
<dbReference type="GO" id="GO:0051225">
    <property type="term" value="P:spindle assembly"/>
    <property type="evidence" value="ECO:0000266"/>
    <property type="project" value="RGD"/>
</dbReference>
<dbReference type="GO" id="GO:0006366">
    <property type="term" value="P:transcription by RNA polymerase II"/>
    <property type="evidence" value="ECO:0000250"/>
    <property type="project" value="UniProtKB"/>
</dbReference>
<dbReference type="GO" id="GO:0006367">
    <property type="term" value="P:transcription initiation at RNA polymerase II promoter"/>
    <property type="evidence" value="ECO:0000250"/>
    <property type="project" value="UniProtKB"/>
</dbReference>
<dbReference type="GO" id="GO:0001174">
    <property type="term" value="P:transcriptional start site selection at RNA polymerase II promoter"/>
    <property type="evidence" value="ECO:0000250"/>
    <property type="project" value="UniProtKB"/>
</dbReference>
<dbReference type="GO" id="GO:0019083">
    <property type="term" value="P:viral transcription"/>
    <property type="evidence" value="ECO:0000250"/>
    <property type="project" value="UniProtKB"/>
</dbReference>
<dbReference type="CDD" id="cd20551">
    <property type="entry name" value="CYCLIN_TFIIB_rpt1"/>
    <property type="match status" value="1"/>
</dbReference>
<dbReference type="CDD" id="cd20552">
    <property type="entry name" value="CYCLIN_TFIIB_rpt2"/>
    <property type="match status" value="1"/>
</dbReference>
<dbReference type="FunFam" id="1.10.472.10:FF:000008">
    <property type="entry name" value="Transcription initiation factor IIB"/>
    <property type="match status" value="1"/>
</dbReference>
<dbReference type="FunFam" id="2.20.25.10:FF:000007">
    <property type="entry name" value="Transcription initiation factor IIB"/>
    <property type="match status" value="1"/>
</dbReference>
<dbReference type="FunFam" id="1.10.472.10:FF:000019">
    <property type="entry name" value="transcription initiation factor IIB"/>
    <property type="match status" value="1"/>
</dbReference>
<dbReference type="Gene3D" id="2.20.25.10">
    <property type="match status" value="1"/>
</dbReference>
<dbReference type="Gene3D" id="1.10.472.10">
    <property type="entry name" value="Cyclin-like"/>
    <property type="match status" value="2"/>
</dbReference>
<dbReference type="InterPro" id="IPR013763">
    <property type="entry name" value="Cyclin-like_dom"/>
</dbReference>
<dbReference type="InterPro" id="IPR036915">
    <property type="entry name" value="Cyclin-like_sf"/>
</dbReference>
<dbReference type="InterPro" id="IPR000812">
    <property type="entry name" value="TFIIB"/>
</dbReference>
<dbReference type="InterPro" id="IPR023486">
    <property type="entry name" value="TFIIB_CS"/>
</dbReference>
<dbReference type="InterPro" id="IPR013150">
    <property type="entry name" value="TFIIB_cyclin"/>
</dbReference>
<dbReference type="InterPro" id="IPR013137">
    <property type="entry name" value="Znf_TFIIB"/>
</dbReference>
<dbReference type="PANTHER" id="PTHR11618:SF77">
    <property type="entry name" value="TRANSCRIPTION INITIATION FACTOR IIB"/>
    <property type="match status" value="1"/>
</dbReference>
<dbReference type="PANTHER" id="PTHR11618">
    <property type="entry name" value="TRANSCRIPTION INITIATION FACTOR IIB-RELATED"/>
    <property type="match status" value="1"/>
</dbReference>
<dbReference type="Pfam" id="PF00382">
    <property type="entry name" value="TFIIB"/>
    <property type="match status" value="2"/>
</dbReference>
<dbReference type="Pfam" id="PF08271">
    <property type="entry name" value="Zn_Ribbon_TF"/>
    <property type="match status" value="1"/>
</dbReference>
<dbReference type="PRINTS" id="PR00685">
    <property type="entry name" value="TIFACTORIIB"/>
</dbReference>
<dbReference type="SMART" id="SM00385">
    <property type="entry name" value="CYCLIN"/>
    <property type="match status" value="2"/>
</dbReference>
<dbReference type="SUPFAM" id="SSF47954">
    <property type="entry name" value="Cyclin-like"/>
    <property type="match status" value="2"/>
</dbReference>
<dbReference type="SUPFAM" id="SSF57783">
    <property type="entry name" value="Zinc beta-ribbon"/>
    <property type="match status" value="1"/>
</dbReference>
<dbReference type="PROSITE" id="PS00782">
    <property type="entry name" value="TFIIB"/>
    <property type="match status" value="2"/>
</dbReference>
<dbReference type="PROSITE" id="PS51134">
    <property type="entry name" value="ZF_TFIIB"/>
    <property type="match status" value="1"/>
</dbReference>
<keyword id="KW-0007">Acetylation</keyword>
<keyword id="KW-0012">Acyltransferase</keyword>
<keyword id="KW-0158">Chromosome</keyword>
<keyword id="KW-0238">DNA-binding</keyword>
<keyword id="KW-0479">Metal-binding</keyword>
<keyword id="KW-0539">Nucleus</keyword>
<keyword id="KW-0597">Phosphoprotein</keyword>
<keyword id="KW-1185">Reference proteome</keyword>
<keyword id="KW-0677">Repeat</keyword>
<keyword id="KW-0804">Transcription</keyword>
<keyword id="KW-0805">Transcription regulation</keyword>
<keyword id="KW-0808">Transferase</keyword>
<keyword id="KW-0862">Zinc</keyword>
<keyword id="KW-0863">Zinc-finger</keyword>
<reference key="1">
    <citation type="journal article" date="1992" name="Nucleic Acids Res.">
        <title>RNA polymerase II initiation factor alpha from rat liver is almost identical to human TFIIB.</title>
        <authorList>
            <person name="Tsuboi A."/>
            <person name="Conger K."/>
            <person name="Garrett K.P."/>
            <person name="Conaway R.C."/>
            <person name="Conaway J.W."/>
            <person name="Arai N."/>
        </authorList>
    </citation>
    <scope>NUCLEOTIDE SEQUENCE [MRNA]</scope>
    <source>
        <tissue>Liver</tissue>
    </source>
</reference>
<reference key="2">
    <citation type="journal article" date="2004" name="Genome Res.">
        <title>The status, quality, and expansion of the NIH full-length cDNA project: the Mammalian Gene Collection (MGC).</title>
        <authorList>
            <consortium name="The MGC Project Team"/>
        </authorList>
    </citation>
    <scope>NUCLEOTIDE SEQUENCE [LARGE SCALE MRNA]</scope>
    <source>
        <tissue>Ovary</tissue>
    </source>
</reference>
<sequence>MASTSRLDALPRVTCPNHPDAILVEDYRAGDMICPECGLVVGDRVIDVGSEWRTFSNDKATKDPSRVGDSQNPLLSDGDLSTMIGKGTGAASFDEFGNSKYQNRRTMSSSDRAMMNAFKEITTMADRINLPRNIVDRTNNLFKQVYEQKSLKGRANDAIASACLYIACRQEGVPRTFKEICAVSRISKKEIGRCFKLILKALETSVDLITTGDFMSRFCSNLCLPKQVQMAATHIARKAVELDLVPGRSPISVAAAAIYMASQASAEKRTQKEIGDIAGVADVTIRQSYRLIYPRAPDLFPSDFKFDTPVDKLPQL</sequence>
<feature type="chain" id="PRO_0000119296" description="Transcription initiation factor IIB">
    <location>
        <begin position="1"/>
        <end position="316"/>
    </location>
</feature>
<feature type="repeat" description="1">
    <location>
        <begin position="124"/>
        <end position="200"/>
    </location>
</feature>
<feature type="repeat" description="2">
    <location>
        <begin position="218"/>
        <end position="294"/>
    </location>
</feature>
<feature type="zinc finger region" description="TFIIB-type" evidence="3">
    <location>
        <begin position="11"/>
        <end position="42"/>
    </location>
</feature>
<feature type="region of interest" description="Core promoter DNA-binding" evidence="2">
    <location>
        <begin position="189"/>
        <end position="193"/>
    </location>
</feature>
<feature type="region of interest" description="Necessary for TATA box-bound TBP complex formation" evidence="2">
    <location>
        <begin position="244"/>
        <end position="316"/>
    </location>
</feature>
<feature type="region of interest" description="Core promoter DNA-binding" evidence="2">
    <location>
        <begin position="249"/>
        <end position="252"/>
    </location>
</feature>
<feature type="region of interest" description="Core promoter DNA-binding" evidence="2">
    <location>
        <begin position="283"/>
        <end position="286"/>
    </location>
</feature>
<feature type="binding site" evidence="3">
    <location>
        <position position="15"/>
    </location>
    <ligand>
        <name>Zn(2+)</name>
        <dbReference type="ChEBI" id="CHEBI:29105"/>
    </ligand>
</feature>
<feature type="binding site" evidence="3">
    <location>
        <position position="18"/>
    </location>
    <ligand>
        <name>Zn(2+)</name>
        <dbReference type="ChEBI" id="CHEBI:29105"/>
    </ligand>
</feature>
<feature type="binding site" evidence="3">
    <location>
        <position position="34"/>
    </location>
    <ligand>
        <name>Zn(2+)</name>
        <dbReference type="ChEBI" id="CHEBI:29105"/>
    </ligand>
</feature>
<feature type="binding site" evidence="3">
    <location>
        <position position="37"/>
    </location>
    <ligand>
        <name>Zn(2+)</name>
        <dbReference type="ChEBI" id="CHEBI:29105"/>
    </ligand>
</feature>
<feature type="binding site" evidence="2">
    <location>
        <position position="152"/>
    </location>
    <ligand>
        <name>DNA</name>
        <dbReference type="ChEBI" id="CHEBI:16991"/>
    </ligand>
</feature>
<feature type="binding site" evidence="2">
    <location>
        <position position="154"/>
    </location>
    <ligand>
        <name>DNA</name>
        <dbReference type="ChEBI" id="CHEBI:16991"/>
    </ligand>
</feature>
<feature type="binding site" evidence="2">
    <location>
        <position position="189"/>
    </location>
    <ligand>
        <name>DNA</name>
        <dbReference type="ChEBI" id="CHEBI:16991"/>
    </ligand>
</feature>
<feature type="binding site" evidence="2">
    <location>
        <position position="196"/>
    </location>
    <ligand>
        <name>DNA</name>
        <dbReference type="ChEBI" id="CHEBI:16991"/>
    </ligand>
</feature>
<feature type="binding site" evidence="2">
    <location>
        <position position="248"/>
    </location>
    <ligand>
        <name>DNA</name>
        <dbReference type="ChEBI" id="CHEBI:16991"/>
    </ligand>
</feature>
<feature type="binding site" evidence="2">
    <location>
        <position position="272"/>
    </location>
    <ligand>
        <name>DNA</name>
        <dbReference type="ChEBI" id="CHEBI:16991"/>
    </ligand>
</feature>
<feature type="binding site" evidence="2">
    <location>
        <position position="281"/>
    </location>
    <ligand>
        <name>DNA</name>
        <dbReference type="ChEBI" id="CHEBI:16991"/>
    </ligand>
</feature>
<feature type="binding site" evidence="2">
    <location>
        <position position="284"/>
    </location>
    <ligand>
        <name>DNA</name>
        <dbReference type="ChEBI" id="CHEBI:16991"/>
    </ligand>
</feature>
<feature type="binding site" evidence="2">
    <location>
        <position position="286"/>
    </location>
    <ligand>
        <name>DNA</name>
        <dbReference type="ChEBI" id="CHEBI:16991"/>
    </ligand>
</feature>
<feature type="binding site" evidence="2">
    <location>
        <position position="290"/>
    </location>
    <ligand>
        <name>DNA</name>
        <dbReference type="ChEBI" id="CHEBI:16991"/>
    </ligand>
</feature>
<feature type="modified residue" description="Phosphoserine" evidence="2">
    <location>
        <position position="70"/>
    </location>
</feature>
<feature type="modified residue" description="Phosphoserine" evidence="2">
    <location>
        <position position="76"/>
    </location>
</feature>
<feature type="modified residue" description="Phosphoserine" evidence="2">
    <location>
        <position position="92"/>
    </location>
</feature>
<feature type="modified residue" description="N6-acetyllysine; by autocatalysis" evidence="2">
    <location>
        <position position="238"/>
    </location>
</feature>
<organism>
    <name type="scientific">Rattus norvegicus</name>
    <name type="common">Rat</name>
    <dbReference type="NCBI Taxonomy" id="10116"/>
    <lineage>
        <taxon>Eukaryota</taxon>
        <taxon>Metazoa</taxon>
        <taxon>Chordata</taxon>
        <taxon>Craniata</taxon>
        <taxon>Vertebrata</taxon>
        <taxon>Euteleostomi</taxon>
        <taxon>Mammalia</taxon>
        <taxon>Eutheria</taxon>
        <taxon>Euarchontoglires</taxon>
        <taxon>Glires</taxon>
        <taxon>Rodentia</taxon>
        <taxon>Myomorpha</taxon>
        <taxon>Muroidea</taxon>
        <taxon>Muridae</taxon>
        <taxon>Murinae</taxon>
        <taxon>Rattus</taxon>
    </lineage>
</organism>
<evidence type="ECO:0000250" key="1">
    <source>
        <dbReference type="UniProtKB" id="P62915"/>
    </source>
</evidence>
<evidence type="ECO:0000250" key="2">
    <source>
        <dbReference type="UniProtKB" id="Q00403"/>
    </source>
</evidence>
<evidence type="ECO:0000255" key="3">
    <source>
        <dbReference type="PROSITE-ProRule" id="PRU00469"/>
    </source>
</evidence>
<evidence type="ECO:0000305" key="4"/>
<evidence type="ECO:0000312" key="5">
    <source>
        <dbReference type="RGD" id="619735"/>
    </source>
</evidence>
<name>TF2B_RAT</name>
<protein>
    <recommendedName>
        <fullName evidence="2">Transcription initiation factor IIB</fullName>
        <ecNumber evidence="2">2.3.1.48</ecNumber>
    </recommendedName>
    <alternativeName>
        <fullName evidence="2">General transcription factor TFIIB</fullName>
    </alternativeName>
    <alternativeName>
        <fullName>RNA polymerase II alpha initiation factor</fullName>
    </alternativeName>
</protein>